<keyword id="KW-1185">Reference proteome</keyword>
<keyword id="KW-0687">Ribonucleoprotein</keyword>
<keyword id="KW-0689">Ribosomal protein</keyword>
<keyword id="KW-0694">RNA-binding</keyword>
<keyword id="KW-0699">rRNA-binding</keyword>
<keyword id="KW-0820">tRNA-binding</keyword>
<evidence type="ECO:0000255" key="1">
    <source>
        <dbReference type="HAMAP-Rule" id="MF_01333"/>
    </source>
</evidence>
<evidence type="ECO:0000305" key="2"/>
<reference key="1">
    <citation type="submission" date="2007-10" db="EMBL/GenBank/DDBJ databases">
        <title>Complete genome of Alkaliphilus oremlandii OhILAs.</title>
        <authorList>
            <person name="Copeland A."/>
            <person name="Lucas S."/>
            <person name="Lapidus A."/>
            <person name="Barry K."/>
            <person name="Detter J.C."/>
            <person name="Glavina del Rio T."/>
            <person name="Hammon N."/>
            <person name="Israni S."/>
            <person name="Dalin E."/>
            <person name="Tice H."/>
            <person name="Pitluck S."/>
            <person name="Chain P."/>
            <person name="Malfatti S."/>
            <person name="Shin M."/>
            <person name="Vergez L."/>
            <person name="Schmutz J."/>
            <person name="Larimer F."/>
            <person name="Land M."/>
            <person name="Hauser L."/>
            <person name="Kyrpides N."/>
            <person name="Mikhailova N."/>
            <person name="Stolz J.F."/>
            <person name="Dawson A."/>
            <person name="Fisher E."/>
            <person name="Crable B."/>
            <person name="Perera E."/>
            <person name="Lisak J."/>
            <person name="Ranganathan M."/>
            <person name="Basu P."/>
            <person name="Richardson P."/>
        </authorList>
    </citation>
    <scope>NUCLEOTIDE SEQUENCE [LARGE SCALE GENOMIC DNA]</scope>
    <source>
        <strain>OhILAs</strain>
    </source>
</reference>
<feature type="chain" id="PRO_1000067616" description="Large ribosomal subunit protein uL5">
    <location>
        <begin position="1"/>
        <end position="179"/>
    </location>
</feature>
<organism>
    <name type="scientific">Alkaliphilus oremlandii (strain OhILAs)</name>
    <name type="common">Clostridium oremlandii (strain OhILAs)</name>
    <dbReference type="NCBI Taxonomy" id="350688"/>
    <lineage>
        <taxon>Bacteria</taxon>
        <taxon>Bacillati</taxon>
        <taxon>Bacillota</taxon>
        <taxon>Clostridia</taxon>
        <taxon>Peptostreptococcales</taxon>
        <taxon>Natronincolaceae</taxon>
        <taxon>Alkaliphilus</taxon>
    </lineage>
</organism>
<dbReference type="EMBL" id="CP000853">
    <property type="protein sequence ID" value="ABW18066.1"/>
    <property type="molecule type" value="Genomic_DNA"/>
</dbReference>
<dbReference type="RefSeq" id="WP_012158380.1">
    <property type="nucleotide sequence ID" value="NC_009922.1"/>
</dbReference>
<dbReference type="SMR" id="A8MLF2"/>
<dbReference type="STRING" id="350688.Clos_0504"/>
<dbReference type="KEGG" id="aoe:Clos_0504"/>
<dbReference type="eggNOG" id="COG0094">
    <property type="taxonomic scope" value="Bacteria"/>
</dbReference>
<dbReference type="HOGENOM" id="CLU_061015_2_1_9"/>
<dbReference type="OrthoDB" id="9806626at2"/>
<dbReference type="Proteomes" id="UP000000269">
    <property type="component" value="Chromosome"/>
</dbReference>
<dbReference type="GO" id="GO:1990904">
    <property type="term" value="C:ribonucleoprotein complex"/>
    <property type="evidence" value="ECO:0007669"/>
    <property type="project" value="UniProtKB-KW"/>
</dbReference>
<dbReference type="GO" id="GO:0005840">
    <property type="term" value="C:ribosome"/>
    <property type="evidence" value="ECO:0007669"/>
    <property type="project" value="UniProtKB-KW"/>
</dbReference>
<dbReference type="GO" id="GO:0019843">
    <property type="term" value="F:rRNA binding"/>
    <property type="evidence" value="ECO:0007669"/>
    <property type="project" value="UniProtKB-UniRule"/>
</dbReference>
<dbReference type="GO" id="GO:0003735">
    <property type="term" value="F:structural constituent of ribosome"/>
    <property type="evidence" value="ECO:0007669"/>
    <property type="project" value="InterPro"/>
</dbReference>
<dbReference type="GO" id="GO:0000049">
    <property type="term" value="F:tRNA binding"/>
    <property type="evidence" value="ECO:0007669"/>
    <property type="project" value="UniProtKB-UniRule"/>
</dbReference>
<dbReference type="GO" id="GO:0006412">
    <property type="term" value="P:translation"/>
    <property type="evidence" value="ECO:0007669"/>
    <property type="project" value="UniProtKB-UniRule"/>
</dbReference>
<dbReference type="FunFam" id="3.30.1440.10:FF:000001">
    <property type="entry name" value="50S ribosomal protein L5"/>
    <property type="match status" value="1"/>
</dbReference>
<dbReference type="Gene3D" id="3.30.1440.10">
    <property type="match status" value="1"/>
</dbReference>
<dbReference type="HAMAP" id="MF_01333_B">
    <property type="entry name" value="Ribosomal_uL5_B"/>
    <property type="match status" value="1"/>
</dbReference>
<dbReference type="InterPro" id="IPR002132">
    <property type="entry name" value="Ribosomal_uL5"/>
</dbReference>
<dbReference type="InterPro" id="IPR020930">
    <property type="entry name" value="Ribosomal_uL5_bac-type"/>
</dbReference>
<dbReference type="InterPro" id="IPR031309">
    <property type="entry name" value="Ribosomal_uL5_C"/>
</dbReference>
<dbReference type="InterPro" id="IPR020929">
    <property type="entry name" value="Ribosomal_uL5_CS"/>
</dbReference>
<dbReference type="InterPro" id="IPR022803">
    <property type="entry name" value="Ribosomal_uL5_dom_sf"/>
</dbReference>
<dbReference type="InterPro" id="IPR031310">
    <property type="entry name" value="Ribosomal_uL5_N"/>
</dbReference>
<dbReference type="NCBIfam" id="NF000585">
    <property type="entry name" value="PRK00010.1"/>
    <property type="match status" value="1"/>
</dbReference>
<dbReference type="PANTHER" id="PTHR11994">
    <property type="entry name" value="60S RIBOSOMAL PROTEIN L11-RELATED"/>
    <property type="match status" value="1"/>
</dbReference>
<dbReference type="Pfam" id="PF00281">
    <property type="entry name" value="Ribosomal_L5"/>
    <property type="match status" value="1"/>
</dbReference>
<dbReference type="Pfam" id="PF00673">
    <property type="entry name" value="Ribosomal_L5_C"/>
    <property type="match status" value="1"/>
</dbReference>
<dbReference type="PIRSF" id="PIRSF002161">
    <property type="entry name" value="Ribosomal_L5"/>
    <property type="match status" value="1"/>
</dbReference>
<dbReference type="SUPFAM" id="SSF55282">
    <property type="entry name" value="RL5-like"/>
    <property type="match status" value="1"/>
</dbReference>
<dbReference type="PROSITE" id="PS00358">
    <property type="entry name" value="RIBOSOMAL_L5"/>
    <property type="match status" value="1"/>
</dbReference>
<proteinExistence type="inferred from homology"/>
<protein>
    <recommendedName>
        <fullName evidence="1">Large ribosomal subunit protein uL5</fullName>
    </recommendedName>
    <alternativeName>
        <fullName evidence="2">50S ribosomal protein L5</fullName>
    </alternativeName>
</protein>
<comment type="function">
    <text evidence="1">This is one of the proteins that bind and probably mediate the attachment of the 5S RNA into the large ribosomal subunit, where it forms part of the central protuberance. In the 70S ribosome it contacts protein S13 of the 30S subunit (bridge B1b), connecting the 2 subunits; this bridge is implicated in subunit movement. Contacts the P site tRNA; the 5S rRNA and some of its associated proteins might help stabilize positioning of ribosome-bound tRNAs.</text>
</comment>
<comment type="subunit">
    <text evidence="1">Part of the 50S ribosomal subunit; part of the 5S rRNA/L5/L18/L25 subcomplex. Contacts the 5S rRNA and the P site tRNA. Forms a bridge to the 30S subunit in the 70S ribosome.</text>
</comment>
<comment type="similarity">
    <text evidence="1">Belongs to the universal ribosomal protein uL5 family.</text>
</comment>
<gene>
    <name evidence="1" type="primary">rplE</name>
    <name type="ordered locus">Clos_0504</name>
</gene>
<accession>A8MLF2</accession>
<sequence length="179" mass="20112">MARLKDMYKSEVAPAMMEKFGYKSVMEIPKIEKIVVNMGLGDSKDNPKGLEAAVKELGIITGQKPVVTRAKKSVANFKLRQGMPIGAKVTLRGEKMYEFADRLLNIALPRVRDFRGVNPNAFDGRGNYALGIKEQLIFPEIEYDKVEKLHGMDIIFVTTAKTDEESRELLKLMGMPFAK</sequence>
<name>RL5_ALKOO</name>